<accession>Q81ZL2</accession>
<accession>Q7C3I8</accession>
<name>SMC_COXBU</name>
<comment type="function">
    <text evidence="1">Required for chromosome condensation and partitioning.</text>
</comment>
<comment type="subunit">
    <text evidence="1">Homodimer.</text>
</comment>
<comment type="subcellular location">
    <subcellularLocation>
        <location evidence="1">Cytoplasm</location>
    </subcellularLocation>
</comment>
<comment type="domain">
    <text evidence="1">Contains large globular domains required for ATP hydrolysis at each terminus and a third globular domain forming a flexible hinge near the middle of the molecule. These domains are separated by coiled-coil structures.</text>
</comment>
<comment type="similarity">
    <text evidence="1">Belongs to the SMC family.</text>
</comment>
<reference key="1">
    <citation type="journal article" date="2004" name="Mol. Biol. Evol.">
        <title>The evolution of SMC proteins: phylogenetic analysis and structural implications.</title>
        <authorList>
            <person name="Cobbe N."/>
            <person name="Heck M.M.S."/>
        </authorList>
    </citation>
    <scope>NUCLEOTIDE SEQUENCE [GENOMIC DNA]</scope>
</reference>
<reference key="2">
    <citation type="journal article" date="2003" name="Proc. Natl. Acad. Sci. U.S.A.">
        <title>Complete genome sequence of the Q-fever pathogen, Coxiella burnetii.</title>
        <authorList>
            <person name="Seshadri R."/>
            <person name="Paulsen I.T."/>
            <person name="Eisen J.A."/>
            <person name="Read T.D."/>
            <person name="Nelson K.E."/>
            <person name="Nelson W.C."/>
            <person name="Ward N.L."/>
            <person name="Tettelin H."/>
            <person name="Davidsen T.M."/>
            <person name="Beanan M.J."/>
            <person name="DeBoy R.T."/>
            <person name="Daugherty S.C."/>
            <person name="Brinkac L.M."/>
            <person name="Madupu R."/>
            <person name="Dodson R.J."/>
            <person name="Khouri H.M."/>
            <person name="Lee K.H."/>
            <person name="Carty H.A."/>
            <person name="Scanlan D."/>
            <person name="Heinzen R.A."/>
            <person name="Thompson H.A."/>
            <person name="Samuel J.E."/>
            <person name="Fraser C.M."/>
            <person name="Heidelberg J.F."/>
        </authorList>
    </citation>
    <scope>NUCLEOTIDE SEQUENCE [LARGE SCALE GENOMIC DNA]</scope>
    <source>
        <strain>RSA 493 / Nine Mile phase I</strain>
    </source>
</reference>
<protein>
    <recommendedName>
        <fullName evidence="1">Chromosome partition protein Smc</fullName>
    </recommendedName>
</protein>
<organism>
    <name type="scientific">Coxiella burnetii (strain RSA 493 / Nine Mile phase I)</name>
    <dbReference type="NCBI Taxonomy" id="227377"/>
    <lineage>
        <taxon>Bacteria</taxon>
        <taxon>Pseudomonadati</taxon>
        <taxon>Pseudomonadota</taxon>
        <taxon>Gammaproteobacteria</taxon>
        <taxon>Legionellales</taxon>
        <taxon>Coxiellaceae</taxon>
        <taxon>Coxiella</taxon>
    </lineage>
</organism>
<feature type="chain" id="PRO_0000409269" description="Chromosome partition protein Smc">
    <location>
        <begin position="1"/>
        <end position="1169"/>
    </location>
</feature>
<feature type="coiled-coil region" evidence="1">
    <location>
        <begin position="170"/>
        <end position="507"/>
    </location>
</feature>
<feature type="coiled-coil region" evidence="1">
    <location>
        <begin position="659"/>
        <end position="1030"/>
    </location>
</feature>
<feature type="binding site" evidence="1">
    <location>
        <begin position="32"/>
        <end position="39"/>
    </location>
    <ligand>
        <name>ATP</name>
        <dbReference type="ChEBI" id="CHEBI:30616"/>
    </ligand>
</feature>
<keyword id="KW-0067">ATP-binding</keyword>
<keyword id="KW-0175">Coiled coil</keyword>
<keyword id="KW-0963">Cytoplasm</keyword>
<keyword id="KW-0238">DNA-binding</keyword>
<keyword id="KW-0547">Nucleotide-binding</keyword>
<keyword id="KW-1185">Reference proteome</keyword>
<sequence>MYLKTIKLAGFKSFVDPTLIPIRGSMNAIVGPNGCGKSNVVDAVRWVIGETSAKQLRGQSMSDVIFNGTTSRKPVGKASIELHFDNSEGRIGGEYAKYGEIAIRREVERDGQSNYFINGAHVRRRDVVDVFLGTGLGPRSYAIVEQGMISNLIEAKPEELRVYIEEAAGISKYKERRRETESRMRHTQENLDRVNDIAEELAKQLRHLKRQANAAERYKAYKQEERALGAQFKVLQWKALDHKLSEHDQAINQKNTRREEKQSEQHRIETEIEKMREQLTDVNEKHNAVQKRYYGLGADIARLEQRIKDTQEKIHQWQSELEENENVWEELQNNTAECEAQITELETELEHLKPRSSDIHSAAAEASKELAQAESNMARWQEAWEAFQAETSQTMSQLEVMRTKREHCERQLTDLEKSKQQLQQNLKQLQLDQLLNEIAPLSSQSELLNAELSDSQSKLQSLAETIASRRDANQTTREELQTQRRELQALEARAASLEALQKAALGESDGKISEWLSSQQLKENPRLGQKLVVNPGWEIAVETVLSGFFDAVCVDAALPFLTDLTTVSEGRVTLVEKKSVSASAFDKAPTLASQVKSEWPFQQWLAGIYIADTLDQAKQLQSSLQENESVITKEGLWLGPHWARISKLQDAPQSGFLLREQQLKQLKANILGQQKKCDEQEALLKSGEQQLNQLETDRDTLLQTYQKLNAEATTVQSALSTKQAQLDNAQQQQTRLKIGLNECEQQIEQCQQQLTLIKNKASSLDDSQGLLATRREEMIRERDHYRTQLIELREKAHQKRKEADELEIRLASNEDQLSLLRQTVARDQRQLKQLTERREMLSQYLSEGDKPLEELNEKLQTQLEQRLILETELREVEKELEEANQLLRHLEEKRVSTQKALNEAQAQLEELRMQRQTVSVRQTTIKEQLSENDFDLEQVMAELPEEATIESWQEKLDQLVERIQRMGPINLAAIEEYESVNERKNYLDKQHADLTEALEILKNAIHKIDRETRAKFQETYDQVNQQFQSLFPRIFGGGRATLEMTDTDLLTAGVIVRAQPPGKRNVTIHMLSGGEKALTAVALVFSLFQLNPAPFCILDEVDAPLDDINVGRFCQLVKEMSKEVQFLVISHNKVTIEMADYLMGVTMQEPGVSRIVSVNMQEAIGLVEA</sequence>
<gene>
    <name evidence="1" type="primary">smc</name>
    <name type="ordered locus">CBU_0540</name>
</gene>
<evidence type="ECO:0000255" key="1">
    <source>
        <dbReference type="HAMAP-Rule" id="MF_01894"/>
    </source>
</evidence>
<dbReference type="EMBL" id="AE016828">
    <property type="protein sequence ID" value="AAO90086.1"/>
    <property type="molecule type" value="Genomic_DNA"/>
</dbReference>
<dbReference type="EMBL" id="AJ543641">
    <property type="protein sequence ID" value="CAD66594.1"/>
    <property type="molecule type" value="Genomic_DNA"/>
</dbReference>
<dbReference type="RefSeq" id="NP_819572.1">
    <property type="nucleotide sequence ID" value="NC_002971.4"/>
</dbReference>
<dbReference type="RefSeq" id="WP_010957646.1">
    <property type="nucleotide sequence ID" value="NC_002971.4"/>
</dbReference>
<dbReference type="SMR" id="Q81ZL2"/>
<dbReference type="STRING" id="227377.CBU_0540"/>
<dbReference type="EnsemblBacteria" id="AAO90086">
    <property type="protein sequence ID" value="AAO90086"/>
    <property type="gene ID" value="CBU_0540"/>
</dbReference>
<dbReference type="GeneID" id="1208425"/>
<dbReference type="KEGG" id="cbu:CBU_0540"/>
<dbReference type="PATRIC" id="fig|227377.7.peg.533"/>
<dbReference type="eggNOG" id="COG1196">
    <property type="taxonomic scope" value="Bacteria"/>
</dbReference>
<dbReference type="HOGENOM" id="CLU_001042_2_2_6"/>
<dbReference type="OrthoDB" id="9808768at2"/>
<dbReference type="Proteomes" id="UP000002671">
    <property type="component" value="Chromosome"/>
</dbReference>
<dbReference type="GO" id="GO:0005694">
    <property type="term" value="C:chromosome"/>
    <property type="evidence" value="ECO:0007669"/>
    <property type="project" value="InterPro"/>
</dbReference>
<dbReference type="GO" id="GO:0005737">
    <property type="term" value="C:cytoplasm"/>
    <property type="evidence" value="ECO:0007669"/>
    <property type="project" value="UniProtKB-SubCell"/>
</dbReference>
<dbReference type="GO" id="GO:0005524">
    <property type="term" value="F:ATP binding"/>
    <property type="evidence" value="ECO:0007669"/>
    <property type="project" value="UniProtKB-UniRule"/>
</dbReference>
<dbReference type="GO" id="GO:0016887">
    <property type="term" value="F:ATP hydrolysis activity"/>
    <property type="evidence" value="ECO:0007669"/>
    <property type="project" value="InterPro"/>
</dbReference>
<dbReference type="GO" id="GO:0003677">
    <property type="term" value="F:DNA binding"/>
    <property type="evidence" value="ECO:0007669"/>
    <property type="project" value="UniProtKB-UniRule"/>
</dbReference>
<dbReference type="GO" id="GO:0030261">
    <property type="term" value="P:chromosome condensation"/>
    <property type="evidence" value="ECO:0007669"/>
    <property type="project" value="InterPro"/>
</dbReference>
<dbReference type="GO" id="GO:0007059">
    <property type="term" value="P:chromosome segregation"/>
    <property type="evidence" value="ECO:0007669"/>
    <property type="project" value="UniProtKB-UniRule"/>
</dbReference>
<dbReference type="GO" id="GO:0006260">
    <property type="term" value="P:DNA replication"/>
    <property type="evidence" value="ECO:0007669"/>
    <property type="project" value="UniProtKB-UniRule"/>
</dbReference>
<dbReference type="GO" id="GO:0007062">
    <property type="term" value="P:sister chromatid cohesion"/>
    <property type="evidence" value="ECO:0007669"/>
    <property type="project" value="InterPro"/>
</dbReference>
<dbReference type="CDD" id="cd03278">
    <property type="entry name" value="ABC_SMC_barmotin"/>
    <property type="match status" value="1"/>
</dbReference>
<dbReference type="Gene3D" id="1.10.287.1490">
    <property type="match status" value="1"/>
</dbReference>
<dbReference type="Gene3D" id="3.40.50.300">
    <property type="entry name" value="P-loop containing nucleotide triphosphate hydrolases"/>
    <property type="match status" value="2"/>
</dbReference>
<dbReference type="HAMAP" id="MF_01894">
    <property type="entry name" value="Smc_prok"/>
    <property type="match status" value="1"/>
</dbReference>
<dbReference type="InterPro" id="IPR027417">
    <property type="entry name" value="P-loop_NTPase"/>
</dbReference>
<dbReference type="InterPro" id="IPR003395">
    <property type="entry name" value="RecF/RecN/SMC_N"/>
</dbReference>
<dbReference type="InterPro" id="IPR024704">
    <property type="entry name" value="SMC"/>
</dbReference>
<dbReference type="InterPro" id="IPR010935">
    <property type="entry name" value="SMC_hinge"/>
</dbReference>
<dbReference type="InterPro" id="IPR036277">
    <property type="entry name" value="SMC_hinge_sf"/>
</dbReference>
<dbReference type="InterPro" id="IPR011890">
    <property type="entry name" value="SMC_prok"/>
</dbReference>
<dbReference type="NCBIfam" id="TIGR02168">
    <property type="entry name" value="SMC_prok_B"/>
    <property type="match status" value="1"/>
</dbReference>
<dbReference type="PANTHER" id="PTHR43977">
    <property type="entry name" value="STRUCTURAL MAINTENANCE OF CHROMOSOMES PROTEIN 3"/>
    <property type="match status" value="1"/>
</dbReference>
<dbReference type="Pfam" id="PF06470">
    <property type="entry name" value="SMC_hinge"/>
    <property type="match status" value="1"/>
</dbReference>
<dbReference type="Pfam" id="PF02463">
    <property type="entry name" value="SMC_N"/>
    <property type="match status" value="2"/>
</dbReference>
<dbReference type="PIRSF" id="PIRSF005719">
    <property type="entry name" value="SMC"/>
    <property type="match status" value="1"/>
</dbReference>
<dbReference type="SMART" id="SM00968">
    <property type="entry name" value="SMC_hinge"/>
    <property type="match status" value="1"/>
</dbReference>
<dbReference type="SUPFAM" id="SSF52540">
    <property type="entry name" value="P-loop containing nucleoside triphosphate hydrolases"/>
    <property type="match status" value="1"/>
</dbReference>
<dbReference type="SUPFAM" id="SSF75553">
    <property type="entry name" value="Smc hinge domain"/>
    <property type="match status" value="1"/>
</dbReference>
<dbReference type="SUPFAM" id="SSF57997">
    <property type="entry name" value="Tropomyosin"/>
    <property type="match status" value="1"/>
</dbReference>
<proteinExistence type="inferred from homology"/>